<protein>
    <recommendedName>
        <fullName evidence="1">Flagellar transcriptional regulator FlhC</fullName>
    </recommendedName>
</protein>
<reference key="1">
    <citation type="journal article" date="2014" name="Stand. Genomic Sci.">
        <title>Complete genome sequence of Burkholderia phymatum STM815(T), a broad host range and efficient nitrogen-fixing symbiont of Mimosa species.</title>
        <authorList>
            <person name="Moulin L."/>
            <person name="Klonowska A."/>
            <person name="Caroline B."/>
            <person name="Booth K."/>
            <person name="Vriezen J.A."/>
            <person name="Melkonian R."/>
            <person name="James E.K."/>
            <person name="Young J.P."/>
            <person name="Bena G."/>
            <person name="Hauser L."/>
            <person name="Land M."/>
            <person name="Kyrpides N."/>
            <person name="Bruce D."/>
            <person name="Chain P."/>
            <person name="Copeland A."/>
            <person name="Pitluck S."/>
            <person name="Woyke T."/>
            <person name="Lizotte-Waniewski M."/>
            <person name="Bristow J."/>
            <person name="Riley M."/>
        </authorList>
    </citation>
    <scope>NUCLEOTIDE SEQUENCE [LARGE SCALE GENOMIC DNA]</scope>
    <source>
        <strain>DSM 17167 / CIP 108236 / LMG 21445 / STM815</strain>
    </source>
</reference>
<gene>
    <name evidence="1" type="primary">flhC</name>
    <name type="ordered locus">Bphy_7082</name>
</gene>
<comment type="function">
    <text evidence="1">Functions in complex with FlhD as a master transcriptional regulator that regulates transcription of several flagellar and non-flagellar operons by binding to their promoter region. Activates expression of class 2 flagellar genes, including fliA, which is a flagellum-specific sigma factor that turns on the class 3 genes. Also regulates genes whose products function in a variety of physiological pathways.</text>
</comment>
<comment type="cofactor">
    <cofactor evidence="1">
        <name>Zn(2+)</name>
        <dbReference type="ChEBI" id="CHEBI:29105"/>
    </cofactor>
    <text evidence="1">Binds 1 zinc ion per subunit.</text>
</comment>
<comment type="subunit">
    <text evidence="1">Heterohexamer composed of two FlhC and four FlhD subunits. Each FlhC binds a FlhD dimer, forming a heterotrimer, and a hexamer assembles by dimerization of two heterotrimers.</text>
</comment>
<comment type="subcellular location">
    <subcellularLocation>
        <location evidence="1">Cytoplasm</location>
    </subcellularLocation>
</comment>
<comment type="similarity">
    <text evidence="1">Belongs to the FlhC family.</text>
</comment>
<organism>
    <name type="scientific">Paraburkholderia phymatum (strain DSM 17167 / CIP 108236 / LMG 21445 / STM815)</name>
    <name type="common">Burkholderia phymatum</name>
    <dbReference type="NCBI Taxonomy" id="391038"/>
    <lineage>
        <taxon>Bacteria</taxon>
        <taxon>Pseudomonadati</taxon>
        <taxon>Pseudomonadota</taxon>
        <taxon>Betaproteobacteria</taxon>
        <taxon>Burkholderiales</taxon>
        <taxon>Burkholderiaceae</taxon>
        <taxon>Paraburkholderia</taxon>
    </lineage>
</organism>
<geneLocation type="plasmid">
    <name>pBPHY01</name>
</geneLocation>
<evidence type="ECO:0000255" key="1">
    <source>
        <dbReference type="HAMAP-Rule" id="MF_01891"/>
    </source>
</evidence>
<dbReference type="EMBL" id="CP001045">
    <property type="protein sequence ID" value="ACC76085.1"/>
    <property type="molecule type" value="Genomic_DNA"/>
</dbReference>
<dbReference type="RefSeq" id="WP_012406241.1">
    <property type="nucleotide sequence ID" value="NC_010625.1"/>
</dbReference>
<dbReference type="SMR" id="B2JU32"/>
<dbReference type="STRING" id="391038.Bphy_4638"/>
<dbReference type="KEGG" id="bph:Bphy_7082"/>
<dbReference type="HOGENOM" id="CLU_122824_0_0_4"/>
<dbReference type="OrthoDB" id="5570801at2"/>
<dbReference type="Proteomes" id="UP000001192">
    <property type="component" value="Plasmid pBPHY01"/>
</dbReference>
<dbReference type="GO" id="GO:0005737">
    <property type="term" value="C:cytoplasm"/>
    <property type="evidence" value="ECO:0007669"/>
    <property type="project" value="UniProtKB-SubCell"/>
</dbReference>
<dbReference type="GO" id="GO:0003677">
    <property type="term" value="F:DNA binding"/>
    <property type="evidence" value="ECO:0007669"/>
    <property type="project" value="UniProtKB-UniRule"/>
</dbReference>
<dbReference type="GO" id="GO:0008270">
    <property type="term" value="F:zinc ion binding"/>
    <property type="evidence" value="ECO:0007669"/>
    <property type="project" value="UniProtKB-UniRule"/>
</dbReference>
<dbReference type="GO" id="GO:0044781">
    <property type="term" value="P:bacterial-type flagellum organization"/>
    <property type="evidence" value="ECO:0007669"/>
    <property type="project" value="UniProtKB-KW"/>
</dbReference>
<dbReference type="GO" id="GO:0045893">
    <property type="term" value="P:positive regulation of DNA-templated transcription"/>
    <property type="evidence" value="ECO:0007669"/>
    <property type="project" value="InterPro"/>
</dbReference>
<dbReference type="GO" id="GO:1902208">
    <property type="term" value="P:regulation of bacterial-type flagellum assembly"/>
    <property type="evidence" value="ECO:0007669"/>
    <property type="project" value="UniProtKB-UniRule"/>
</dbReference>
<dbReference type="HAMAP" id="MF_01891">
    <property type="entry name" value="FhlC"/>
    <property type="match status" value="1"/>
</dbReference>
<dbReference type="InterPro" id="IPR007944">
    <property type="entry name" value="FlhC"/>
</dbReference>
<dbReference type="NCBIfam" id="NF009365">
    <property type="entry name" value="PRK12722.1"/>
    <property type="match status" value="1"/>
</dbReference>
<dbReference type="Pfam" id="PF05280">
    <property type="entry name" value="FlhC"/>
    <property type="match status" value="1"/>
</dbReference>
<dbReference type="PIRSF" id="PIRSF003159">
    <property type="entry name" value="FlhC"/>
    <property type="match status" value="1"/>
</dbReference>
<dbReference type="SUPFAM" id="SSF160930">
    <property type="entry name" value="FlhC-like"/>
    <property type="match status" value="1"/>
</dbReference>
<sequence>MSKKSLSEDAQEVFRAIALIELGARMQVLESELTLSRERMIRLYREVKGVSPPKGMLPFSADWYTTWLANIHASLFYNTYRFLRDEARCSHLDALTKGYRLYLEHCRHNQTEPVLDLTRAWTLVRFFDANILQLTPCCRCSGKFIGHKHDLQHNVVCDACQPPSRAGKTKKAAAAKRDAQPQLVEVQHAANDVETIAVESLAAVETVAPGVFEEAVLAA</sequence>
<accession>B2JU32</accession>
<proteinExistence type="inferred from homology"/>
<keyword id="KW-0010">Activator</keyword>
<keyword id="KW-1005">Bacterial flagellum biogenesis</keyword>
<keyword id="KW-0963">Cytoplasm</keyword>
<keyword id="KW-0238">DNA-binding</keyword>
<keyword id="KW-0479">Metal-binding</keyword>
<keyword id="KW-0614">Plasmid</keyword>
<keyword id="KW-1185">Reference proteome</keyword>
<keyword id="KW-0804">Transcription</keyword>
<keyword id="KW-0805">Transcription regulation</keyword>
<keyword id="KW-0862">Zinc</keyword>
<feature type="chain" id="PRO_0000406755" description="Flagellar transcriptional regulator FlhC">
    <location>
        <begin position="1"/>
        <end position="219"/>
    </location>
</feature>
<feature type="binding site" evidence="1">
    <location>
        <position position="137"/>
    </location>
    <ligand>
        <name>Zn(2+)</name>
        <dbReference type="ChEBI" id="CHEBI:29105"/>
    </ligand>
</feature>
<feature type="binding site" evidence="1">
    <location>
        <position position="140"/>
    </location>
    <ligand>
        <name>Zn(2+)</name>
        <dbReference type="ChEBI" id="CHEBI:29105"/>
    </ligand>
</feature>
<feature type="binding site" evidence="1">
    <location>
        <position position="157"/>
    </location>
    <ligand>
        <name>Zn(2+)</name>
        <dbReference type="ChEBI" id="CHEBI:29105"/>
    </ligand>
</feature>
<feature type="binding site" evidence="1">
    <location>
        <position position="160"/>
    </location>
    <ligand>
        <name>Zn(2+)</name>
        <dbReference type="ChEBI" id="CHEBI:29105"/>
    </ligand>
</feature>
<name>FLHC_PARP8</name>